<sequence length="263" mass="28083">MRPFEDSPISRDGKVLILAYDHGLEHGPVDFEAVPATKDPEAVWDVATHDAVSAMAAQKGIAEAYYPSYSDDVNLLAKLNGTSNLWMGEPDSAVNWTVDYAADVGADAVGFTLYGGSNSEVEMAEEFRDAQEAARDHDLPVVMWSYPRGQGLKNDKNPDTIAYAARQALELGADIAKVKYPGSTDAMSHAVDMAGPTNVVMSGGSKTSDRDFLESVKGAIDAGASGLAVGRNVWQREHPAAFLDGLEAVVYEEASVDEALGRI</sequence>
<comment type="function">
    <text evidence="2">Has aldolase activity with fructose 1,6-bisphosphate. May play a role in the biosynthesis of aromatic amino acids (AroAA).</text>
</comment>
<comment type="catalytic activity">
    <reaction evidence="2">
        <text>beta-D-fructose 1,6-bisphosphate = D-glyceraldehyde 3-phosphate + dihydroxyacetone phosphate</text>
        <dbReference type="Rhea" id="RHEA:14729"/>
        <dbReference type="ChEBI" id="CHEBI:32966"/>
        <dbReference type="ChEBI" id="CHEBI:57642"/>
        <dbReference type="ChEBI" id="CHEBI:59776"/>
        <dbReference type="EC" id="4.1.2.13"/>
    </reaction>
</comment>
<comment type="similarity">
    <text evidence="4">Belongs to the DeoC/FbaB aldolase family.</text>
</comment>
<evidence type="ECO:0000250" key="1"/>
<evidence type="ECO:0000269" key="2">
    <source>
    </source>
</evidence>
<evidence type="ECO:0000303" key="3">
    <source>
    </source>
</evidence>
<evidence type="ECO:0000305" key="4"/>
<proteinExistence type="evidence at protein level"/>
<accession>B0R3Y0</accession>
<gene>
    <name type="primary">fba1</name>
    <name type="ordered locus">OE_2019F</name>
</gene>
<name>ALF1_HALS3</name>
<keyword id="KW-0324">Glycolysis</keyword>
<keyword id="KW-0456">Lyase</keyword>
<keyword id="KW-0704">Schiff base</keyword>
<dbReference type="EC" id="4.1.2.13" evidence="2"/>
<dbReference type="EMBL" id="AM774415">
    <property type="protein sequence ID" value="CAP13445.1"/>
    <property type="molecule type" value="Genomic_DNA"/>
</dbReference>
<dbReference type="RefSeq" id="WP_010902472.1">
    <property type="nucleotide sequence ID" value="NC_010364.1"/>
</dbReference>
<dbReference type="SMR" id="B0R3Y0"/>
<dbReference type="EnsemblBacteria" id="CAP13445">
    <property type="protein sequence ID" value="CAP13445"/>
    <property type="gene ID" value="OE_2019F"/>
</dbReference>
<dbReference type="GeneID" id="89349142"/>
<dbReference type="KEGG" id="hsl:OE_2019F"/>
<dbReference type="HOGENOM" id="CLU_057069_2_2_2"/>
<dbReference type="PhylomeDB" id="B0R3Y0"/>
<dbReference type="Proteomes" id="UP000001321">
    <property type="component" value="Chromosome"/>
</dbReference>
<dbReference type="GO" id="GO:0004332">
    <property type="term" value="F:fructose-bisphosphate aldolase activity"/>
    <property type="evidence" value="ECO:0000314"/>
    <property type="project" value="UniProtKB"/>
</dbReference>
<dbReference type="GO" id="GO:0009073">
    <property type="term" value="P:aromatic amino acid family biosynthetic process"/>
    <property type="evidence" value="ECO:0000314"/>
    <property type="project" value="UniProtKB"/>
</dbReference>
<dbReference type="GO" id="GO:0006096">
    <property type="term" value="P:glycolytic process"/>
    <property type="evidence" value="ECO:0007669"/>
    <property type="project" value="UniProtKB-KW"/>
</dbReference>
<dbReference type="CDD" id="cd00958">
    <property type="entry name" value="DhnA"/>
    <property type="match status" value="1"/>
</dbReference>
<dbReference type="Gene3D" id="3.20.20.70">
    <property type="entry name" value="Aldolase class I"/>
    <property type="match status" value="1"/>
</dbReference>
<dbReference type="InterPro" id="IPR013785">
    <property type="entry name" value="Aldolase_TIM"/>
</dbReference>
<dbReference type="InterPro" id="IPR002915">
    <property type="entry name" value="DeoC/FbaB/LacD_aldolase"/>
</dbReference>
<dbReference type="InterPro" id="IPR050456">
    <property type="entry name" value="DeoC/FbaB_aldolase"/>
</dbReference>
<dbReference type="InterPro" id="IPR041720">
    <property type="entry name" value="FbaB-like"/>
</dbReference>
<dbReference type="PANTHER" id="PTHR47916:SF1">
    <property type="entry name" value="3-HYDROXY-5-PHOSPHONOOXYPENTANE-2,4-DIONE THIOLASE"/>
    <property type="match status" value="1"/>
</dbReference>
<dbReference type="PANTHER" id="PTHR47916">
    <property type="entry name" value="FRUCTOSE-BISPHOSPHATE ALDOLASE CLASS 1"/>
    <property type="match status" value="1"/>
</dbReference>
<dbReference type="Pfam" id="PF01791">
    <property type="entry name" value="DeoC"/>
    <property type="match status" value="1"/>
</dbReference>
<dbReference type="PIRSF" id="PIRSF038992">
    <property type="entry name" value="Aldolase_Ia"/>
    <property type="match status" value="1"/>
</dbReference>
<dbReference type="SMART" id="SM01133">
    <property type="entry name" value="DeoC"/>
    <property type="match status" value="1"/>
</dbReference>
<dbReference type="SUPFAM" id="SSF51569">
    <property type="entry name" value="Aldolase"/>
    <property type="match status" value="1"/>
</dbReference>
<reference key="1">
    <citation type="journal article" date="2008" name="Genomics">
        <title>Evolution in the laboratory: the genome of Halobacterium salinarum strain R1 compared to that of strain NRC-1.</title>
        <authorList>
            <person name="Pfeiffer F."/>
            <person name="Schuster S.C."/>
            <person name="Broicher A."/>
            <person name="Falb M."/>
            <person name="Palm P."/>
            <person name="Rodewald K."/>
            <person name="Ruepp A."/>
            <person name="Soppa J."/>
            <person name="Tittor J."/>
            <person name="Oesterhelt D."/>
        </authorList>
    </citation>
    <scope>NUCLEOTIDE SEQUENCE [LARGE SCALE GENOMIC DNA]</scope>
    <source>
        <strain>ATCC 29341 / DSM 671 / R1</strain>
    </source>
</reference>
<reference key="2">
    <citation type="journal article" date="2014" name="PLoS ONE">
        <title>How do haloarchaea synthesize aromatic amino acids?</title>
        <authorList>
            <person name="Gulko M.K."/>
            <person name="Dyall-Smith M."/>
            <person name="Gonzalez O."/>
            <person name="Oesterhelt D."/>
        </authorList>
    </citation>
    <scope>FUNCTION</scope>
    <scope>CATALYTIC ACTIVITY</scope>
    <source>
        <strain>ATCC 29341 / DSM 671 / R1</strain>
    </source>
</reference>
<feature type="chain" id="PRO_0000431483" description="Fructose-bisphosphate aldolase class 1">
    <location>
        <begin position="1"/>
        <end position="263"/>
    </location>
</feature>
<feature type="active site" description="Schiff-base intermediate with dihydroxyacetone-P" evidence="1">
    <location>
        <position position="177"/>
    </location>
</feature>
<organism>
    <name type="scientific">Halobacterium salinarum (strain ATCC 29341 / DSM 671 / R1)</name>
    <dbReference type="NCBI Taxonomy" id="478009"/>
    <lineage>
        <taxon>Archaea</taxon>
        <taxon>Methanobacteriati</taxon>
        <taxon>Methanobacteriota</taxon>
        <taxon>Stenosarchaea group</taxon>
        <taxon>Halobacteria</taxon>
        <taxon>Halobacteriales</taxon>
        <taxon>Halobacteriaceae</taxon>
        <taxon>Halobacterium</taxon>
        <taxon>Halobacterium salinarum NRC-34001</taxon>
    </lineage>
</organism>
<protein>
    <recommendedName>
        <fullName evidence="3">Fructose-bisphosphate aldolase class 1</fullName>
        <ecNumber evidence="2">4.1.2.13</ecNumber>
    </recommendedName>
    <alternativeName>
        <fullName evidence="3">Fructose-bisphosphate aldolase class I</fullName>
        <shortName evidence="3">FBP aldolase</shortName>
    </alternativeName>
</protein>